<name>MTG1_HUMAN</name>
<proteinExistence type="evidence at protein level"/>
<evidence type="ECO:0000250" key="1"/>
<evidence type="ECO:0000255" key="2"/>
<evidence type="ECO:0000255" key="3">
    <source>
        <dbReference type="PROSITE-ProRule" id="PRU01058"/>
    </source>
</evidence>
<evidence type="ECO:0000269" key="4">
    <source>
    </source>
</evidence>
<evidence type="ECO:0000269" key="5">
    <source>
    </source>
</evidence>
<evidence type="ECO:0000269" key="6">
    <source>
    </source>
</evidence>
<evidence type="ECO:0000303" key="7">
    <source>
    </source>
</evidence>
<evidence type="ECO:0000305" key="8"/>
<dbReference type="EMBL" id="AK074976">
    <property type="protein sequence ID" value="BAC11327.1"/>
    <property type="molecule type" value="mRNA"/>
</dbReference>
<dbReference type="EMBL" id="AL161645">
    <property type="status" value="NOT_ANNOTATED_CDS"/>
    <property type="molecule type" value="Genomic_DNA"/>
</dbReference>
<dbReference type="EMBL" id="AL360181">
    <property type="status" value="NOT_ANNOTATED_CDS"/>
    <property type="molecule type" value="Genomic_DNA"/>
</dbReference>
<dbReference type="EMBL" id="BC000920">
    <property type="protein sequence ID" value="AAH00920.1"/>
    <property type="molecule type" value="mRNA"/>
</dbReference>
<dbReference type="EMBL" id="BC004409">
    <property type="protein sequence ID" value="AAH04409.1"/>
    <property type="status" value="ALT_INIT"/>
    <property type="molecule type" value="mRNA"/>
</dbReference>
<dbReference type="EMBL" id="BC026039">
    <property type="protein sequence ID" value="AAH26039.1"/>
    <property type="molecule type" value="mRNA"/>
</dbReference>
<dbReference type="EMBL" id="BC035721">
    <property type="protein sequence ID" value="AAH35721.1"/>
    <property type="status" value="ALT_INIT"/>
    <property type="molecule type" value="mRNA"/>
</dbReference>
<dbReference type="CCDS" id="CCDS31320.1">
    <molecule id="Q9BT17-1"/>
</dbReference>
<dbReference type="RefSeq" id="NP_612393.2">
    <molecule id="Q9BT17-1"/>
    <property type="nucleotide sequence ID" value="NM_138384.4"/>
</dbReference>
<dbReference type="PDB" id="7O9K">
    <property type="method" value="EM"/>
    <property type="resolution" value="3.10 A"/>
    <property type="chains" value="C=1-334"/>
</dbReference>
<dbReference type="PDB" id="7O9M">
    <property type="method" value="EM"/>
    <property type="resolution" value="2.50 A"/>
    <property type="chains" value="C=1-333"/>
</dbReference>
<dbReference type="PDB" id="7PD3">
    <property type="method" value="EM"/>
    <property type="resolution" value="3.40 A"/>
    <property type="chains" value="z=1-334"/>
</dbReference>
<dbReference type="PDB" id="8PK0">
    <property type="method" value="EM"/>
    <property type="resolution" value="3.03 A"/>
    <property type="chains" value="z=1-334"/>
</dbReference>
<dbReference type="PDB" id="8QSJ">
    <property type="method" value="EM"/>
    <property type="resolution" value="3.00 A"/>
    <property type="chains" value="z=1-334"/>
</dbReference>
<dbReference type="PDBsum" id="7O9K"/>
<dbReference type="PDBsum" id="7O9M"/>
<dbReference type="PDBsum" id="7PD3"/>
<dbReference type="PDBsum" id="8PK0"/>
<dbReference type="PDBsum" id="8QSJ"/>
<dbReference type="EMDB" id="EMD-12763"/>
<dbReference type="EMDB" id="EMD-12764"/>
<dbReference type="EMDB" id="EMD-13329"/>
<dbReference type="EMDB" id="EMD-17719"/>
<dbReference type="SMR" id="Q9BT17"/>
<dbReference type="BioGRID" id="124916">
    <property type="interactions" value="157"/>
</dbReference>
<dbReference type="FunCoup" id="Q9BT17">
    <property type="interactions" value="1913"/>
</dbReference>
<dbReference type="IntAct" id="Q9BT17">
    <property type="interactions" value="25"/>
</dbReference>
<dbReference type="MINT" id="Q9BT17"/>
<dbReference type="STRING" id="9606.ENSP00000323047"/>
<dbReference type="iPTMnet" id="Q9BT17"/>
<dbReference type="PhosphoSitePlus" id="Q9BT17"/>
<dbReference type="BioMuta" id="MTG1"/>
<dbReference type="DMDM" id="134034174"/>
<dbReference type="jPOST" id="Q9BT17"/>
<dbReference type="MassIVE" id="Q9BT17"/>
<dbReference type="PaxDb" id="9606-ENSP00000323047"/>
<dbReference type="PeptideAtlas" id="Q9BT17"/>
<dbReference type="ProteomicsDB" id="78941">
    <molecule id="Q9BT17-1"/>
</dbReference>
<dbReference type="ProteomicsDB" id="78942">
    <molecule id="Q9BT17-2"/>
</dbReference>
<dbReference type="Pumba" id="Q9BT17"/>
<dbReference type="Antibodypedia" id="32682">
    <property type="antibodies" value="107 antibodies from 20 providers"/>
</dbReference>
<dbReference type="DNASU" id="92170"/>
<dbReference type="Ensembl" id="ENST00000317502.11">
    <molecule id="Q9BT17-1"/>
    <property type="protein sequence ID" value="ENSP00000323047.6"/>
    <property type="gene ID" value="ENSG00000148824.19"/>
</dbReference>
<dbReference type="GeneID" id="92170"/>
<dbReference type="KEGG" id="hsa:92170"/>
<dbReference type="MANE-Select" id="ENST00000317502.11">
    <property type="protein sequence ID" value="ENSP00000323047.6"/>
    <property type="RefSeq nucleotide sequence ID" value="NM_138384.4"/>
    <property type="RefSeq protein sequence ID" value="NP_612393.2"/>
</dbReference>
<dbReference type="UCSC" id="uc001lnd.4">
    <molecule id="Q9BT17-1"/>
    <property type="organism name" value="human"/>
</dbReference>
<dbReference type="AGR" id="HGNC:32159"/>
<dbReference type="CTD" id="92170"/>
<dbReference type="DisGeNET" id="92170"/>
<dbReference type="GeneCards" id="MTG1"/>
<dbReference type="HGNC" id="HGNC:32159">
    <property type="gene designation" value="MTG1"/>
</dbReference>
<dbReference type="HPA" id="ENSG00000148824">
    <property type="expression patterns" value="Low tissue specificity"/>
</dbReference>
<dbReference type="neXtProt" id="NX_Q9BT17"/>
<dbReference type="OpenTargets" id="ENSG00000148824"/>
<dbReference type="PharmGKB" id="PA142671306"/>
<dbReference type="VEuPathDB" id="HostDB:ENSG00000148824"/>
<dbReference type="eggNOG" id="KOG2485">
    <property type="taxonomic scope" value="Eukaryota"/>
</dbReference>
<dbReference type="GeneTree" id="ENSGT00500000044923"/>
<dbReference type="InParanoid" id="Q9BT17"/>
<dbReference type="OMA" id="GVLWPKF"/>
<dbReference type="OrthoDB" id="269151at2759"/>
<dbReference type="PAN-GO" id="Q9BT17">
    <property type="GO annotations" value="3 GO annotations based on evolutionary models"/>
</dbReference>
<dbReference type="PhylomeDB" id="Q9BT17"/>
<dbReference type="PathwayCommons" id="Q9BT17"/>
<dbReference type="SignaLink" id="Q9BT17"/>
<dbReference type="BioGRID-ORCS" id="92170">
    <property type="hits" value="212 hits in 1161 CRISPR screens"/>
</dbReference>
<dbReference type="ChiTaRS" id="MTG1">
    <property type="organism name" value="human"/>
</dbReference>
<dbReference type="GeneWiki" id="MTG1"/>
<dbReference type="GenomeRNAi" id="92170"/>
<dbReference type="Pharos" id="Q9BT17">
    <property type="development level" value="Tbio"/>
</dbReference>
<dbReference type="PRO" id="PR:Q9BT17"/>
<dbReference type="Proteomes" id="UP000005640">
    <property type="component" value="Chromosome 10"/>
</dbReference>
<dbReference type="RNAct" id="Q9BT17">
    <property type="molecule type" value="protein"/>
</dbReference>
<dbReference type="Bgee" id="ENSG00000148824">
    <property type="expression patterns" value="Expressed in right lobe of liver and 141 other cell types or tissues"/>
</dbReference>
<dbReference type="ExpressionAtlas" id="Q9BT17">
    <property type="expression patterns" value="baseline and differential"/>
</dbReference>
<dbReference type="GO" id="GO:0005743">
    <property type="term" value="C:mitochondrial inner membrane"/>
    <property type="evidence" value="ECO:0000314"/>
    <property type="project" value="UniProtKB"/>
</dbReference>
<dbReference type="GO" id="GO:0005759">
    <property type="term" value="C:mitochondrial matrix"/>
    <property type="evidence" value="ECO:0000314"/>
    <property type="project" value="UniProtKB"/>
</dbReference>
<dbReference type="GO" id="GO:0005761">
    <property type="term" value="C:mitochondrial ribosome"/>
    <property type="evidence" value="ECO:0000314"/>
    <property type="project" value="UniProtKB"/>
</dbReference>
<dbReference type="GO" id="GO:0005739">
    <property type="term" value="C:mitochondrion"/>
    <property type="evidence" value="ECO:0000314"/>
    <property type="project" value="HPA"/>
</dbReference>
<dbReference type="GO" id="GO:0005654">
    <property type="term" value="C:nucleoplasm"/>
    <property type="evidence" value="ECO:0000314"/>
    <property type="project" value="HPA"/>
</dbReference>
<dbReference type="GO" id="GO:0005525">
    <property type="term" value="F:GTP binding"/>
    <property type="evidence" value="ECO:0007669"/>
    <property type="project" value="UniProtKB-KW"/>
</dbReference>
<dbReference type="GO" id="GO:0003924">
    <property type="term" value="F:GTPase activity"/>
    <property type="evidence" value="ECO:0000314"/>
    <property type="project" value="UniProtKB"/>
</dbReference>
<dbReference type="GO" id="GO:1902775">
    <property type="term" value="P:mitochondrial large ribosomal subunit assembly"/>
    <property type="evidence" value="ECO:0000315"/>
    <property type="project" value="FlyBase"/>
</dbReference>
<dbReference type="GO" id="GO:0032543">
    <property type="term" value="P:mitochondrial translation"/>
    <property type="evidence" value="ECO:0000318"/>
    <property type="project" value="GO_Central"/>
</dbReference>
<dbReference type="GO" id="GO:0070129">
    <property type="term" value="P:regulation of mitochondrial translation"/>
    <property type="evidence" value="ECO:0000315"/>
    <property type="project" value="UniProtKB"/>
</dbReference>
<dbReference type="GO" id="GO:0044065">
    <property type="term" value="P:regulation of respiratory system process"/>
    <property type="evidence" value="ECO:0000315"/>
    <property type="project" value="UniProtKB"/>
</dbReference>
<dbReference type="CDD" id="cd01856">
    <property type="entry name" value="YlqF"/>
    <property type="match status" value="1"/>
</dbReference>
<dbReference type="FunFam" id="1.10.1580.10:FF:000004">
    <property type="entry name" value="Mitochondrial GTPase 1"/>
    <property type="match status" value="1"/>
</dbReference>
<dbReference type="FunFam" id="3.40.50.300:FF:000876">
    <property type="entry name" value="Mitochondrial GTPase 1"/>
    <property type="match status" value="1"/>
</dbReference>
<dbReference type="Gene3D" id="1.10.1580.10">
    <property type="match status" value="1"/>
</dbReference>
<dbReference type="Gene3D" id="3.40.50.300">
    <property type="entry name" value="P-loop containing nucleotide triphosphate hydrolases"/>
    <property type="match status" value="1"/>
</dbReference>
<dbReference type="InterPro" id="IPR030378">
    <property type="entry name" value="G_CP_dom"/>
</dbReference>
<dbReference type="InterPro" id="IPR006073">
    <property type="entry name" value="GTP-bd"/>
</dbReference>
<dbReference type="InterPro" id="IPR023179">
    <property type="entry name" value="GTP-bd_ortho_bundle_sf"/>
</dbReference>
<dbReference type="InterPro" id="IPR019991">
    <property type="entry name" value="GTP-bd_ribosome_bgen"/>
</dbReference>
<dbReference type="InterPro" id="IPR016478">
    <property type="entry name" value="GTPase_MTG1"/>
</dbReference>
<dbReference type="InterPro" id="IPR027417">
    <property type="entry name" value="P-loop_NTPase"/>
</dbReference>
<dbReference type="NCBIfam" id="TIGR03596">
    <property type="entry name" value="GTPase_YlqF"/>
    <property type="match status" value="1"/>
</dbReference>
<dbReference type="PANTHER" id="PTHR45782">
    <property type="entry name" value="MITOCHONDRIAL RIBOSOME-ASSOCIATED GTPASE 1"/>
    <property type="match status" value="1"/>
</dbReference>
<dbReference type="PANTHER" id="PTHR45782:SF4">
    <property type="entry name" value="MITOCHONDRIAL RIBOSOME-ASSOCIATED GTPASE 1"/>
    <property type="match status" value="1"/>
</dbReference>
<dbReference type="Pfam" id="PF01926">
    <property type="entry name" value="MMR_HSR1"/>
    <property type="match status" value="1"/>
</dbReference>
<dbReference type="PIRSF" id="PIRSF006230">
    <property type="entry name" value="MG442"/>
    <property type="match status" value="1"/>
</dbReference>
<dbReference type="SUPFAM" id="SSF52540">
    <property type="entry name" value="P-loop containing nucleoside triphosphate hydrolases"/>
    <property type="match status" value="1"/>
</dbReference>
<dbReference type="PROSITE" id="PS51721">
    <property type="entry name" value="G_CP"/>
    <property type="match status" value="1"/>
</dbReference>
<keyword id="KW-0002">3D-structure</keyword>
<keyword id="KW-0025">Alternative splicing</keyword>
<keyword id="KW-0342">GTP-binding</keyword>
<keyword id="KW-0472">Membrane</keyword>
<keyword id="KW-0496">Mitochondrion</keyword>
<keyword id="KW-0999">Mitochondrion inner membrane</keyword>
<keyword id="KW-0547">Nucleotide-binding</keyword>
<keyword id="KW-1267">Proteomics identification</keyword>
<keyword id="KW-1185">Reference proteome</keyword>
<keyword id="KW-0809">Transit peptide</keyword>
<keyword id="KW-0810">Translation regulation</keyword>
<sequence>MRLTPRALCSAAQAAWRENFPLCGRDVARWFPGHMAKGLKKMQSSLKLVDCIIEVHDARIPLSGRNPLFQETLGLKPHLLVLNKMDLADLTEQQKIMQHLEGEGLKNVIFTNCVKDENVKQIIPMVTELIGRSHRYHRKENLEYCIMVIGVPNVGKSSLINSLRRQHLRKGKATRVGGEPGITRAVMSKIQVSERPLMFLLDTPGVLAPRIESVETGLKLALCGTVLDHLVGEETMADYLLYTLNKHQRFGYVQHYGLGSACDNVERVLKSVAVKLGKTQKVKVLTGTGNVNIIQPNYPAAARDFLQTFRRGLLGSVMLDLDVLRGHPPAETLP</sequence>
<accession>Q9BT17</accession>
<accession>Q5VWX8</accession>
<accession>Q6PIY9</accession>
<accession>Q8IYJ4</accession>
<accession>Q8NC48</accession>
<accession>Q9BVU8</accession>
<organism>
    <name type="scientific">Homo sapiens</name>
    <name type="common">Human</name>
    <dbReference type="NCBI Taxonomy" id="9606"/>
    <lineage>
        <taxon>Eukaryota</taxon>
        <taxon>Metazoa</taxon>
        <taxon>Chordata</taxon>
        <taxon>Craniata</taxon>
        <taxon>Vertebrata</taxon>
        <taxon>Euteleostomi</taxon>
        <taxon>Mammalia</taxon>
        <taxon>Eutheria</taxon>
        <taxon>Euarchontoglires</taxon>
        <taxon>Primates</taxon>
        <taxon>Haplorrhini</taxon>
        <taxon>Catarrhini</taxon>
        <taxon>Hominidae</taxon>
        <taxon>Homo</taxon>
    </lineage>
</organism>
<reference key="1">
    <citation type="journal article" date="2004" name="Nat. Genet.">
        <title>Complete sequencing and characterization of 21,243 full-length human cDNAs.</title>
        <authorList>
            <person name="Ota T."/>
            <person name="Suzuki Y."/>
            <person name="Nishikawa T."/>
            <person name="Otsuki T."/>
            <person name="Sugiyama T."/>
            <person name="Irie R."/>
            <person name="Wakamatsu A."/>
            <person name="Hayashi K."/>
            <person name="Sato H."/>
            <person name="Nagai K."/>
            <person name="Kimura K."/>
            <person name="Makita H."/>
            <person name="Sekine M."/>
            <person name="Obayashi M."/>
            <person name="Nishi T."/>
            <person name="Shibahara T."/>
            <person name="Tanaka T."/>
            <person name="Ishii S."/>
            <person name="Yamamoto J."/>
            <person name="Saito K."/>
            <person name="Kawai Y."/>
            <person name="Isono Y."/>
            <person name="Nakamura Y."/>
            <person name="Nagahari K."/>
            <person name="Murakami K."/>
            <person name="Yasuda T."/>
            <person name="Iwayanagi T."/>
            <person name="Wagatsuma M."/>
            <person name="Shiratori A."/>
            <person name="Sudo H."/>
            <person name="Hosoiri T."/>
            <person name="Kaku Y."/>
            <person name="Kodaira H."/>
            <person name="Kondo H."/>
            <person name="Sugawara M."/>
            <person name="Takahashi M."/>
            <person name="Kanda K."/>
            <person name="Yokoi T."/>
            <person name="Furuya T."/>
            <person name="Kikkawa E."/>
            <person name="Omura Y."/>
            <person name="Abe K."/>
            <person name="Kamihara K."/>
            <person name="Katsuta N."/>
            <person name="Sato K."/>
            <person name="Tanikawa M."/>
            <person name="Yamazaki M."/>
            <person name="Ninomiya K."/>
            <person name="Ishibashi T."/>
            <person name="Yamashita H."/>
            <person name="Murakawa K."/>
            <person name="Fujimori K."/>
            <person name="Tanai H."/>
            <person name="Kimata M."/>
            <person name="Watanabe M."/>
            <person name="Hiraoka S."/>
            <person name="Chiba Y."/>
            <person name="Ishida S."/>
            <person name="Ono Y."/>
            <person name="Takiguchi S."/>
            <person name="Watanabe S."/>
            <person name="Yosida M."/>
            <person name="Hotuta T."/>
            <person name="Kusano J."/>
            <person name="Kanehori K."/>
            <person name="Takahashi-Fujii A."/>
            <person name="Hara H."/>
            <person name="Tanase T.-O."/>
            <person name="Nomura Y."/>
            <person name="Togiya S."/>
            <person name="Komai F."/>
            <person name="Hara R."/>
            <person name="Takeuchi K."/>
            <person name="Arita M."/>
            <person name="Imose N."/>
            <person name="Musashino K."/>
            <person name="Yuuki H."/>
            <person name="Oshima A."/>
            <person name="Sasaki N."/>
            <person name="Aotsuka S."/>
            <person name="Yoshikawa Y."/>
            <person name="Matsunawa H."/>
            <person name="Ichihara T."/>
            <person name="Shiohata N."/>
            <person name="Sano S."/>
            <person name="Moriya S."/>
            <person name="Momiyama H."/>
            <person name="Satoh N."/>
            <person name="Takami S."/>
            <person name="Terashima Y."/>
            <person name="Suzuki O."/>
            <person name="Nakagawa S."/>
            <person name="Senoh A."/>
            <person name="Mizoguchi H."/>
            <person name="Goto Y."/>
            <person name="Shimizu F."/>
            <person name="Wakebe H."/>
            <person name="Hishigaki H."/>
            <person name="Watanabe T."/>
            <person name="Sugiyama A."/>
            <person name="Takemoto M."/>
            <person name="Kawakami B."/>
            <person name="Yamazaki M."/>
            <person name="Watanabe K."/>
            <person name="Kumagai A."/>
            <person name="Itakura S."/>
            <person name="Fukuzumi Y."/>
            <person name="Fujimori Y."/>
            <person name="Komiyama M."/>
            <person name="Tashiro H."/>
            <person name="Tanigami A."/>
            <person name="Fujiwara T."/>
            <person name="Ono T."/>
            <person name="Yamada K."/>
            <person name="Fujii Y."/>
            <person name="Ozaki K."/>
            <person name="Hirao M."/>
            <person name="Ohmori Y."/>
            <person name="Kawabata A."/>
            <person name="Hikiji T."/>
            <person name="Kobatake N."/>
            <person name="Inagaki H."/>
            <person name="Ikema Y."/>
            <person name="Okamoto S."/>
            <person name="Okitani R."/>
            <person name="Kawakami T."/>
            <person name="Noguchi S."/>
            <person name="Itoh T."/>
            <person name="Shigeta K."/>
            <person name="Senba T."/>
            <person name="Matsumura K."/>
            <person name="Nakajima Y."/>
            <person name="Mizuno T."/>
            <person name="Morinaga M."/>
            <person name="Sasaki M."/>
            <person name="Togashi T."/>
            <person name="Oyama M."/>
            <person name="Hata H."/>
            <person name="Watanabe M."/>
            <person name="Komatsu T."/>
            <person name="Mizushima-Sugano J."/>
            <person name="Satoh T."/>
            <person name="Shirai Y."/>
            <person name="Takahashi Y."/>
            <person name="Nakagawa K."/>
            <person name="Okumura K."/>
            <person name="Nagase T."/>
            <person name="Nomura N."/>
            <person name="Kikuchi H."/>
            <person name="Masuho Y."/>
            <person name="Yamashita R."/>
            <person name="Nakai K."/>
            <person name="Yada T."/>
            <person name="Nakamura Y."/>
            <person name="Ohara O."/>
            <person name="Isogai T."/>
            <person name="Sugano S."/>
        </authorList>
    </citation>
    <scope>NUCLEOTIDE SEQUENCE [LARGE SCALE MRNA] (ISOFORM 2)</scope>
    <source>
        <tissue>Teratocarcinoma</tissue>
    </source>
</reference>
<reference key="2">
    <citation type="journal article" date="2004" name="Nature">
        <title>The DNA sequence and comparative analysis of human chromosome 10.</title>
        <authorList>
            <person name="Deloukas P."/>
            <person name="Earthrowl M.E."/>
            <person name="Grafham D.V."/>
            <person name="Rubenfield M."/>
            <person name="French L."/>
            <person name="Steward C.A."/>
            <person name="Sims S.K."/>
            <person name="Jones M.C."/>
            <person name="Searle S."/>
            <person name="Scott C."/>
            <person name="Howe K."/>
            <person name="Hunt S.E."/>
            <person name="Andrews T.D."/>
            <person name="Gilbert J.G.R."/>
            <person name="Swarbreck D."/>
            <person name="Ashurst J.L."/>
            <person name="Taylor A."/>
            <person name="Battles J."/>
            <person name="Bird C.P."/>
            <person name="Ainscough R."/>
            <person name="Almeida J.P."/>
            <person name="Ashwell R.I.S."/>
            <person name="Ambrose K.D."/>
            <person name="Babbage A.K."/>
            <person name="Bagguley C.L."/>
            <person name="Bailey J."/>
            <person name="Banerjee R."/>
            <person name="Bates K."/>
            <person name="Beasley H."/>
            <person name="Bray-Allen S."/>
            <person name="Brown A.J."/>
            <person name="Brown J.Y."/>
            <person name="Burford D.C."/>
            <person name="Burrill W."/>
            <person name="Burton J."/>
            <person name="Cahill P."/>
            <person name="Camire D."/>
            <person name="Carter N.P."/>
            <person name="Chapman J.C."/>
            <person name="Clark S.Y."/>
            <person name="Clarke G."/>
            <person name="Clee C.M."/>
            <person name="Clegg S."/>
            <person name="Corby N."/>
            <person name="Coulson A."/>
            <person name="Dhami P."/>
            <person name="Dutta I."/>
            <person name="Dunn M."/>
            <person name="Faulkner L."/>
            <person name="Frankish A."/>
            <person name="Frankland J.A."/>
            <person name="Garner P."/>
            <person name="Garnett J."/>
            <person name="Gribble S."/>
            <person name="Griffiths C."/>
            <person name="Grocock R."/>
            <person name="Gustafson E."/>
            <person name="Hammond S."/>
            <person name="Harley J.L."/>
            <person name="Hart E."/>
            <person name="Heath P.D."/>
            <person name="Ho T.P."/>
            <person name="Hopkins B."/>
            <person name="Horne J."/>
            <person name="Howden P.J."/>
            <person name="Huckle E."/>
            <person name="Hynds C."/>
            <person name="Johnson C."/>
            <person name="Johnson D."/>
            <person name="Kana A."/>
            <person name="Kay M."/>
            <person name="Kimberley A.M."/>
            <person name="Kershaw J.K."/>
            <person name="Kokkinaki M."/>
            <person name="Laird G.K."/>
            <person name="Lawlor S."/>
            <person name="Lee H.M."/>
            <person name="Leongamornlert D.A."/>
            <person name="Laird G."/>
            <person name="Lloyd C."/>
            <person name="Lloyd D.M."/>
            <person name="Loveland J."/>
            <person name="Lovell J."/>
            <person name="McLaren S."/>
            <person name="McLay K.E."/>
            <person name="McMurray A."/>
            <person name="Mashreghi-Mohammadi M."/>
            <person name="Matthews L."/>
            <person name="Milne S."/>
            <person name="Nickerson T."/>
            <person name="Nguyen M."/>
            <person name="Overton-Larty E."/>
            <person name="Palmer S.A."/>
            <person name="Pearce A.V."/>
            <person name="Peck A.I."/>
            <person name="Pelan S."/>
            <person name="Phillimore B."/>
            <person name="Porter K."/>
            <person name="Rice C.M."/>
            <person name="Rogosin A."/>
            <person name="Ross M.T."/>
            <person name="Sarafidou T."/>
            <person name="Sehra H.K."/>
            <person name="Shownkeen R."/>
            <person name="Skuce C.D."/>
            <person name="Smith M."/>
            <person name="Standring L."/>
            <person name="Sycamore N."/>
            <person name="Tester J."/>
            <person name="Thorpe A."/>
            <person name="Torcasso W."/>
            <person name="Tracey A."/>
            <person name="Tromans A."/>
            <person name="Tsolas J."/>
            <person name="Wall M."/>
            <person name="Walsh J."/>
            <person name="Wang H."/>
            <person name="Weinstock K."/>
            <person name="West A.P."/>
            <person name="Willey D.L."/>
            <person name="Whitehead S.L."/>
            <person name="Wilming L."/>
            <person name="Wray P.W."/>
            <person name="Young L."/>
            <person name="Chen Y."/>
            <person name="Lovering R.C."/>
            <person name="Moschonas N.K."/>
            <person name="Siebert R."/>
            <person name="Fechtel K."/>
            <person name="Bentley D."/>
            <person name="Durbin R.M."/>
            <person name="Hubbard T."/>
            <person name="Doucette-Stamm L."/>
            <person name="Beck S."/>
            <person name="Smith D.R."/>
            <person name="Rogers J."/>
        </authorList>
    </citation>
    <scope>NUCLEOTIDE SEQUENCE [LARGE SCALE GENOMIC DNA]</scope>
</reference>
<reference key="3">
    <citation type="journal article" date="2004" name="Genome Res.">
        <title>The status, quality, and expansion of the NIH full-length cDNA project: the Mammalian Gene Collection (MGC).</title>
        <authorList>
            <consortium name="The MGC Project Team"/>
        </authorList>
    </citation>
    <scope>NUCLEOTIDE SEQUENCE [LARGE SCALE MRNA] (ISOFORM 1)</scope>
    <scope>VARIANT VAL-293</scope>
    <source>
        <tissue>Ovary</tissue>
        <tissue>Pancreas</tissue>
        <tissue>Placenta</tissue>
        <tissue>Skin</tissue>
    </source>
</reference>
<reference key="4">
    <citation type="journal article" date="2003" name="Mol. Biol. Cell">
        <title>MTG1 codes for a conserved protein required for mitochondrial translation.</title>
        <authorList>
            <person name="Barrientos A."/>
            <person name="Korr D."/>
            <person name="Barwell K.J."/>
            <person name="Sjulsen C."/>
            <person name="Gajewski C.D."/>
            <person name="Manfredi G."/>
            <person name="Ackerman S."/>
            <person name="Tzagoloff A."/>
        </authorList>
    </citation>
    <scope>POSSIBLE FUNCTION</scope>
    <scope>SUBCELLULAR LOCATION</scope>
</reference>
<reference key="5">
    <citation type="journal article" date="2013" name="Nucleic Acids Res.">
        <title>Human G-proteins, ObgH1 and Mtg1, associate with the large mitochondrial ribosome subunit and are involved in translation and assembly of respiratory complexes.</title>
        <authorList>
            <person name="Kotani T."/>
            <person name="Akabane S."/>
            <person name="Takeyasu K."/>
            <person name="Ueda T."/>
            <person name="Takeuchi N."/>
        </authorList>
    </citation>
    <scope>FUNCTION</scope>
    <scope>ASSOCIATION WITH MITOCHONDRIAL RIBOSOME LARGE SUBUNIT</scope>
    <scope>SUBCELLULAR LOCATION</scope>
</reference>
<gene>
    <name type="primary">MTG1</name>
    <name type="synonym">GTPBP7</name>
</gene>
<feature type="transit peptide" description="Mitochondrion" evidence="2">
    <location>
        <begin position="1"/>
        <end status="unknown"/>
    </location>
</feature>
<feature type="chain" id="PRO_0000280262" description="Mitochondrial ribosome-associated GTPase 1">
    <location>
        <begin status="unknown"/>
        <end position="334"/>
    </location>
</feature>
<feature type="domain" description="CP-type G" evidence="3">
    <location>
        <begin position="36"/>
        <end position="209"/>
    </location>
</feature>
<feature type="binding site" evidence="1">
    <location>
        <begin position="83"/>
        <end position="86"/>
    </location>
    <ligand>
        <name>GTP</name>
        <dbReference type="ChEBI" id="CHEBI:37565"/>
    </ligand>
</feature>
<feature type="binding site" evidence="1">
    <location>
        <begin position="153"/>
        <end position="158"/>
    </location>
    <ligand>
        <name>GTP</name>
        <dbReference type="ChEBI" id="CHEBI:37565"/>
    </ligand>
</feature>
<feature type="binding site" evidence="1">
    <location>
        <position position="205"/>
    </location>
    <ligand>
        <name>GTP</name>
        <dbReference type="ChEBI" id="CHEBI:37565"/>
    </ligand>
</feature>
<feature type="splice variant" id="VSP_023581" description="In isoform 2." evidence="7">
    <original>SERPLMFLLDTPGVLAPRIESVETGLKLALCGTVLDHLVGEETMADYLLYTLNKHQRFGYVQHYGLGSACDNVER</original>
    <variation>ESSGARPSTLSRALQASGTCRPLCGFRLLTTLPSPPLSVPAEHPRGRHCPCPYSTVVIVFAPNLWGRHAVFPISR</variation>
    <location>
        <begin position="193"/>
        <end position="267"/>
    </location>
</feature>
<feature type="splice variant" id="VSP_023582" description="In isoform 2." evidence="7">
    <location>
        <begin position="268"/>
        <end position="334"/>
    </location>
</feature>
<feature type="sequence variant" id="VAR_062181" description="In dbSNP:rs2255246." evidence="5">
    <original>I</original>
    <variation>V</variation>
    <location>
        <position position="293"/>
    </location>
</feature>
<protein>
    <recommendedName>
        <fullName>Mitochondrial ribosome-associated GTPase 1</fullName>
    </recommendedName>
    <alternativeName>
        <fullName>GTP-binding protein 7</fullName>
    </alternativeName>
    <alternativeName>
        <fullName>Mitochondrial GTPase 1</fullName>
    </alternativeName>
</protein>
<comment type="function">
    <text evidence="6">Plays a role in the regulation of the mitochondrial ribosome assembly and of translational activity. Displays mitochondrial GTPase activity.</text>
</comment>
<comment type="subunit">
    <text evidence="6">Associates with the mitochondrial ribosome large subunit; the association occurs in a GTP-dependent manner (PubMed:23396448).</text>
</comment>
<comment type="interaction">
    <interactant intactId="EBI-2602570">
        <id>Q9BT17</id>
    </interactant>
    <interactant intactId="EBI-12902263">
        <id>Q86X53</id>
        <label>ERICH1</label>
    </interactant>
    <organismsDiffer>false</organismsDiffer>
    <experiments>3</experiments>
</comment>
<comment type="interaction">
    <interactant intactId="EBI-2602570">
        <id>Q9BT17</id>
    </interactant>
    <interactant intactId="EBI-1045716">
        <id>O76014</id>
        <label>KRT37</label>
    </interactant>
    <organismsDiffer>false</organismsDiffer>
    <experiments>3</experiments>
</comment>
<comment type="interaction">
    <interactant intactId="EBI-2602570">
        <id>Q9BT17</id>
    </interactant>
    <interactant intactId="EBI-79165">
        <id>Q9NRD5</id>
        <label>PICK1</label>
    </interactant>
    <organismsDiffer>false</organismsDiffer>
    <experiments>3</experiments>
</comment>
<comment type="interaction">
    <interactant intactId="EBI-2602570">
        <id>Q9BT17</id>
    </interactant>
    <interactant intactId="EBI-11956649">
        <id>P32856-2</id>
        <label>STX2</label>
    </interactant>
    <organismsDiffer>false</organismsDiffer>
    <experiments>3</experiments>
</comment>
<comment type="subcellular location">
    <subcellularLocation>
        <location evidence="4 6">Mitochondrion inner membrane</location>
        <topology evidence="4 6">Peripheral membrane protein</topology>
        <orientation evidence="4 6">Matrix side</orientation>
    </subcellularLocation>
</comment>
<comment type="alternative products">
    <event type="alternative splicing"/>
    <isoform>
        <id>Q9BT17-1</id>
        <name>1</name>
        <sequence type="displayed"/>
    </isoform>
    <isoform>
        <id>Q9BT17-2</id>
        <name>2</name>
        <sequence type="described" ref="VSP_023581 VSP_023582"/>
    </isoform>
</comment>
<comment type="similarity">
    <text evidence="3">Belongs to the TRAFAC class YlqF/YawG GTPase family. MTG1 subfamily.</text>
</comment>
<comment type="sequence caution" evidence="8">
    <conflict type="erroneous initiation">
        <sequence resource="EMBL-CDS" id="AAH04409"/>
    </conflict>
    <text>Extended N-terminus.</text>
</comment>
<comment type="sequence caution" evidence="8">
    <conflict type="erroneous initiation">
        <sequence resource="EMBL-CDS" id="AAH35721"/>
    </conflict>
    <text>Truncated N-terminus.</text>
</comment>